<organism>
    <name type="scientific">Saccharomyces cerevisiae (strain JAY291)</name>
    <name type="common">Baker's yeast</name>
    <dbReference type="NCBI Taxonomy" id="574961"/>
    <lineage>
        <taxon>Eukaryota</taxon>
        <taxon>Fungi</taxon>
        <taxon>Dikarya</taxon>
        <taxon>Ascomycota</taxon>
        <taxon>Saccharomycotina</taxon>
        <taxon>Saccharomycetes</taxon>
        <taxon>Saccharomycetales</taxon>
        <taxon>Saccharomycetaceae</taxon>
        <taxon>Saccharomyces</taxon>
    </lineage>
</organism>
<comment type="function">
    <text evidence="1">Functions as a sorting receptor in the Golgi compartment required for the intracellular sorting and delivery of soluble vacuolar proteins, like carboxypeptidase Y (CPY) and proteinase A. Executes multiple rounds of sorting by cycling between the late Golgi and a prevacuolar endosome-like compartment. Binds the Golgi-modified P2 form of CPY, and this interaction is dependent on the presence of an intact CPY vacuolar protein sorting signal (By similarity).</text>
</comment>
<comment type="subcellular location">
    <subcellularLocation>
        <location evidence="1">Golgi apparatus</location>
        <location evidence="1">trans-Golgi network membrane</location>
        <topology evidence="1">Single-pass type I membrane protein</topology>
    </subcellularLocation>
    <subcellularLocation>
        <location evidence="1">Prevacuolar compartment membrane</location>
        <topology evidence="1">Single-pass type I membrane protein</topology>
    </subcellularLocation>
    <text evidence="1">Cycles between the Golgi apparatus and the prevacuolar compartment.</text>
</comment>
<comment type="similarity">
    <text evidence="4">Belongs to the VPS10-related sortilin family.</text>
</comment>
<feature type="signal peptide" evidence="2">
    <location>
        <begin position="1"/>
        <end position="21"/>
    </location>
</feature>
<feature type="chain" id="PRO_0000407544" description="Vacuolar protein sorting/targeting protein PEP1">
    <location>
        <begin position="22"/>
        <end position="1577"/>
    </location>
</feature>
<feature type="topological domain" description="Lumenal" evidence="2">
    <location>
        <begin position="22"/>
        <end position="1391"/>
    </location>
</feature>
<feature type="transmembrane region" description="Helical" evidence="2">
    <location>
        <begin position="1392"/>
        <end position="1412"/>
    </location>
</feature>
<feature type="topological domain" description="Cytoplasmic" evidence="2">
    <location>
        <begin position="1413"/>
        <end position="1577"/>
    </location>
</feature>
<feature type="repeat" description="BNR 1">
    <location>
        <begin position="58"/>
        <end position="68"/>
    </location>
</feature>
<feature type="repeat" description="BNR 2">
    <location>
        <begin position="101"/>
        <end position="111"/>
    </location>
</feature>
<feature type="repeat" description="BNR 3">
    <location>
        <begin position="179"/>
        <end position="187"/>
    </location>
</feature>
<feature type="repeat" description="BNR 4">
    <location>
        <begin position="414"/>
        <end position="423"/>
    </location>
</feature>
<feature type="repeat" description="BNR 5">
    <location>
        <begin position="485"/>
        <end position="495"/>
    </location>
</feature>
<feature type="repeat" description="BNR 6">
    <location>
        <begin position="531"/>
        <end position="541"/>
    </location>
</feature>
<feature type="repeat" description="BNR 7">
    <location>
        <begin position="762"/>
        <end position="771"/>
    </location>
</feature>
<feature type="repeat" description="BNR 8">
    <location>
        <begin position="859"/>
        <end position="869"/>
    </location>
</feature>
<feature type="repeat" description="BNR 9">
    <location>
        <begin position="1141"/>
        <end position="1150"/>
    </location>
</feature>
<feature type="repeat" description="BNR 10">
    <location>
        <begin position="1183"/>
        <end position="1192"/>
    </location>
</feature>
<feature type="region of interest" description="Disordered" evidence="3">
    <location>
        <begin position="1531"/>
        <end position="1577"/>
    </location>
</feature>
<feature type="glycosylation site" description="N-linked (GlcNAc...) asparagine" evidence="2">
    <location>
        <position position="121"/>
    </location>
</feature>
<feature type="glycosylation site" description="N-linked (GlcNAc...) asparagine" evidence="2">
    <location>
        <position position="168"/>
    </location>
</feature>
<feature type="glycosylation site" description="N-linked (GlcNAc...) asparagine" evidence="2">
    <location>
        <position position="445"/>
    </location>
</feature>
<feature type="glycosylation site" description="N-linked (GlcNAc...) asparagine" evidence="2">
    <location>
        <position position="791"/>
    </location>
</feature>
<feature type="glycosylation site" description="N-linked (GlcNAc...) asparagine" evidence="2">
    <location>
        <position position="1008"/>
    </location>
</feature>
<feature type="glycosylation site" description="N-linked (GlcNAc...) asparagine" evidence="2">
    <location>
        <position position="1301"/>
    </location>
</feature>
<accession>C7GX93</accession>
<reference key="1">
    <citation type="journal article" date="2009" name="Genome Res.">
        <title>Genome structure of a Saccharomyces cerevisiae strain widely used in bioethanol production.</title>
        <authorList>
            <person name="Argueso J.L."/>
            <person name="Carazzolle M.F."/>
            <person name="Mieczkowski P.A."/>
            <person name="Duarte F.M."/>
            <person name="Netto O.V.C."/>
            <person name="Missawa S.K."/>
            <person name="Galzerani F."/>
            <person name="Costa G.G.L."/>
            <person name="Vidal R.O."/>
            <person name="Noronha M.F."/>
            <person name="Dominska M."/>
            <person name="Andrietta M.G.S."/>
            <person name="Andrietta S.R."/>
            <person name="Cunha A.F."/>
            <person name="Gomes L.H."/>
            <person name="Tavares F.C.A."/>
            <person name="Alcarde A.R."/>
            <person name="Dietrich F.S."/>
            <person name="McCusker J.H."/>
            <person name="Petes T.D."/>
            <person name="Pereira G.A.G."/>
        </authorList>
    </citation>
    <scope>NUCLEOTIDE SEQUENCE [LARGE SCALE GENOMIC DNA]</scope>
    <source>
        <strain>JAY291</strain>
    </source>
</reference>
<gene>
    <name type="primary">PEP1</name>
    <name type="synonym">VPS10</name>
    <name type="synonym">VPT1</name>
    <name type="ORF">C1Q_05135</name>
</gene>
<sequence length="1577" mass="177554">MILLHFVYSLWALLLIPLINAEEFTPKVTKTIAQDSFEILSFDDSNTLIRKQDASVTISFDDGETWEKVEGIEDEITWIYIDPFNRHDRAVATSMYESRLYITNDQGKSWERITLPDSEKNISSRGCYIETHPLNKNYFLAKCNYCEKTEVDNEENSGDEEGAPVIFNITHCTDKVFASNDGGKSFSEIKSSLERNENSAISISDCGFAKTGKDSDLESSDTSIICLFQNMQLIMDEFSSPYTESKLVLTTDWGKSLKEFDQFKDKVVNGYRILKSHMVVITQGDRYNDMSSMDVWVSNDLSNFKMAYMPTQLRHSMQGEIYEDAMGRIILPMSRERSDQEEDKGIVSEILISDSQGLKFSPIPWTANEVFGYINLYQPTYLKGTMIASLYPLSRRRNRKGKAKGVKNKGVTKISVDNGLTWTVLKVVDPDNADSFDCDITDFENCSLQNMFYTREGSTPTAGILMTTGIVGDGSVFDWGDQRTFISRDGGLTWKLAFDFPCLYAVGDYGNVIVAIPYNADEDDDPQSEFYYSLDQGKTWTEYQLETTIYPNEVMNTTPDGSGAKFILNGFTLAHMDGTTNFIYAIDFSTAFNDKTCEENDFEDWNLAEGKCVNGVKYKIRRRKQDAQCLVKKVFEDLQLFETACDKCTEADYECAFEFVRDATGKCVPDYNLIVLSDVCDKTKKKTVPVKPLQLVKGDKCKKPMTVKSVDISCEGVPKKGTNDKEIVVTENKFDFKIQFYQYFDTVTDESLLMINSRGEAYISHDGGQTIRRFDSNGETIIEVVFNPYYNSSAYLFGSKGSIFSTHDRGYSFMTAKLPEARQLGMPLDFNAKAQDTFIYYGGKNCESILSPECHAVAYLTNDGGETFTEMLDNAIHCEFAGSLFKYPSNEDMVMCQVKEKSSQTRSLVSSTDFFQDDKNTVFENIIGYLSTGGYIIVAVPHENNELRAYVTIDGTEFAEAKFPYDEDVGKQEAFTILESEKGSIFLHLATNLVPGRDFGNLLKSNSNGTSFVTLEHAVNRNTFGYVDFEKIQGLEGIILTNIVSNSDKVAENKEDKQLKTKITFNEGSDWNFLKPPKRDSEGKKFSCSSKSLDECSLHLHGYTERKDIRDTYSSGSALGMMFGVGNVGPNLLPYKECSTFFTTDGGETWAEVKKTPHQWEYGDHGGILVLVPENSETDSISYSTDFGKTWKDYKFCADKVLVKDITTVPRDSALRFLLFGEAADIGGSSFRTYTIDFRNIFERQCDFDITGKESADYKYSPLSSKSNCLFGHQTEFLRKTDENCFIGNIPLSEFSRNIKNCSCTRQDFECDYNFYKANDGTCKLVKGLSPANAADVCKKEPDLIEYFESSGYRKIPLSTCEGGLKLDAPSSPHACPGKEKEFKEKYSVSAGPFAFIFISILLIIFFAAWFVYDRGIRRNGGFARFGEIRLGDDGLIENNNTDRVVNNIVKSGFYVFSNIGSLLQHTKTNIAHVISKIRGRFGNRTGPSYSSLIHDQFLDEADDLLAGHDEDANDLSSFMDQGSNFEIEEDDVPTLEEEHTSYTDQPTTTDVPDALPEGNEENIDRPDSTAPSNENQ</sequence>
<dbReference type="EMBL" id="ACFL01000421">
    <property type="protein sequence ID" value="EEU04577.1"/>
    <property type="molecule type" value="Genomic_DNA"/>
</dbReference>
<dbReference type="SMR" id="C7GX93"/>
<dbReference type="GlyCosmos" id="C7GX93">
    <property type="glycosylation" value="6 sites, No reported glycans"/>
</dbReference>
<dbReference type="Proteomes" id="UP000008073">
    <property type="component" value="Unassembled WGS sequence"/>
</dbReference>
<dbReference type="GO" id="GO:0005829">
    <property type="term" value="C:cytosol"/>
    <property type="evidence" value="ECO:0007669"/>
    <property type="project" value="GOC"/>
</dbReference>
<dbReference type="GO" id="GO:0005794">
    <property type="term" value="C:Golgi apparatus"/>
    <property type="evidence" value="ECO:0007669"/>
    <property type="project" value="UniProtKB-SubCell"/>
</dbReference>
<dbReference type="GO" id="GO:0016020">
    <property type="term" value="C:membrane"/>
    <property type="evidence" value="ECO:0007669"/>
    <property type="project" value="UniProtKB-KW"/>
</dbReference>
<dbReference type="GO" id="GO:0006895">
    <property type="term" value="P:Golgi to endosome transport"/>
    <property type="evidence" value="ECO:0007669"/>
    <property type="project" value="TreeGrafter"/>
</dbReference>
<dbReference type="GO" id="GO:0006896">
    <property type="term" value="P:Golgi to vacuole transport"/>
    <property type="evidence" value="ECO:0007669"/>
    <property type="project" value="TreeGrafter"/>
</dbReference>
<dbReference type="GO" id="GO:0006623">
    <property type="term" value="P:protein targeting to vacuole"/>
    <property type="evidence" value="ECO:0007669"/>
    <property type="project" value="TreeGrafter"/>
</dbReference>
<dbReference type="CDD" id="cd15482">
    <property type="entry name" value="Sialidase_non-viral"/>
    <property type="match status" value="2"/>
</dbReference>
<dbReference type="FunFam" id="3.30.60.270:FF:000005">
    <property type="entry name" value="Sortilin"/>
    <property type="match status" value="1"/>
</dbReference>
<dbReference type="FunFam" id="2.130.10.10:FF:001564">
    <property type="entry name" value="Vacuolar protein sorting/targeting protein PEP1"/>
    <property type="match status" value="1"/>
</dbReference>
<dbReference type="FunFam" id="3.30.60.270:FF:000008">
    <property type="entry name" value="Vacuolar protein sorting/targeting protein PEP1"/>
    <property type="match status" value="1"/>
</dbReference>
<dbReference type="FunFam" id="2.130.10.10:FF:000998">
    <property type="entry name" value="VPS10 homolog 2"/>
    <property type="match status" value="1"/>
</dbReference>
<dbReference type="Gene3D" id="2.10.70.80">
    <property type="match status" value="1"/>
</dbReference>
<dbReference type="Gene3D" id="2.120.10.10">
    <property type="match status" value="1"/>
</dbReference>
<dbReference type="Gene3D" id="3.30.60.270">
    <property type="match status" value="2"/>
</dbReference>
<dbReference type="Gene3D" id="2.130.10.10">
    <property type="entry name" value="YVTN repeat-like/Quinoprotein amine dehydrogenase"/>
    <property type="match status" value="3"/>
</dbReference>
<dbReference type="InterPro" id="IPR036278">
    <property type="entry name" value="Sialidase_sf"/>
</dbReference>
<dbReference type="InterPro" id="IPR031777">
    <property type="entry name" value="Sortilin_C"/>
</dbReference>
<dbReference type="InterPro" id="IPR031778">
    <property type="entry name" value="Sortilin_N"/>
</dbReference>
<dbReference type="InterPro" id="IPR006581">
    <property type="entry name" value="VPS10"/>
</dbReference>
<dbReference type="InterPro" id="IPR050310">
    <property type="entry name" value="VPS10-sortilin"/>
</dbReference>
<dbReference type="InterPro" id="IPR015943">
    <property type="entry name" value="WD40/YVTN_repeat-like_dom_sf"/>
</dbReference>
<dbReference type="PANTHER" id="PTHR12106">
    <property type="entry name" value="SORTILIN RELATED"/>
    <property type="match status" value="1"/>
</dbReference>
<dbReference type="PANTHER" id="PTHR12106:SF27">
    <property type="entry name" value="SORTILIN-RELATED RECEPTOR"/>
    <property type="match status" value="1"/>
</dbReference>
<dbReference type="Pfam" id="PF15902">
    <property type="entry name" value="Sortilin-Vps10"/>
    <property type="match status" value="2"/>
</dbReference>
<dbReference type="Pfam" id="PF15901">
    <property type="entry name" value="Sortilin_C"/>
    <property type="match status" value="2"/>
</dbReference>
<dbReference type="SMART" id="SM00602">
    <property type="entry name" value="VPS10"/>
    <property type="match status" value="2"/>
</dbReference>
<dbReference type="SUPFAM" id="SSF110296">
    <property type="entry name" value="Oligoxyloglucan reducing end-specific cellobiohydrolase"/>
    <property type="match status" value="2"/>
</dbReference>
<dbReference type="SUPFAM" id="SSF50939">
    <property type="entry name" value="Sialidases"/>
    <property type="match status" value="1"/>
</dbReference>
<proteinExistence type="inferred from homology"/>
<name>VPS10_YEAS2</name>
<protein>
    <recommendedName>
        <fullName>Vacuolar protein sorting/targeting protein PEP1</fullName>
    </recommendedName>
    <alternativeName>
        <fullName>Carboxypeptidase Y receptor</fullName>
        <shortName>CPY receptor</shortName>
    </alternativeName>
    <alternativeName>
        <fullName>Carboxypeptidase Y-deficient protein 1</fullName>
    </alternativeName>
    <alternativeName>
        <fullName>Sortilin VPS10</fullName>
    </alternativeName>
    <alternativeName>
        <fullName>Vacuolar carboxypeptidase sorting receptor VPS10</fullName>
    </alternativeName>
    <alternativeName>
        <fullName>Vacuolar protein sorting-associated protein 10</fullName>
    </alternativeName>
    <alternativeName>
        <fullName>Vacuolar protein-targeting protein 1</fullName>
    </alternativeName>
</protein>
<evidence type="ECO:0000250" key="1"/>
<evidence type="ECO:0000255" key="2"/>
<evidence type="ECO:0000256" key="3">
    <source>
        <dbReference type="SAM" id="MobiDB-lite"/>
    </source>
</evidence>
<evidence type="ECO:0000305" key="4"/>
<keyword id="KW-0325">Glycoprotein</keyword>
<keyword id="KW-0333">Golgi apparatus</keyword>
<keyword id="KW-0472">Membrane</keyword>
<keyword id="KW-0653">Protein transport</keyword>
<keyword id="KW-0675">Receptor</keyword>
<keyword id="KW-0677">Repeat</keyword>
<keyword id="KW-0732">Signal</keyword>
<keyword id="KW-0812">Transmembrane</keyword>
<keyword id="KW-1133">Transmembrane helix</keyword>
<keyword id="KW-0813">Transport</keyword>